<dbReference type="EMBL" id="U61402">
    <property type="protein sequence ID" value="AAD00092.1"/>
    <property type="molecule type" value="Genomic_DNA"/>
</dbReference>
<dbReference type="RefSeq" id="WP_011226273.1">
    <property type="nucleotide sequence ID" value="NZ_WMLD01000001.1"/>
</dbReference>
<dbReference type="SMR" id="Q9ZB11"/>
<dbReference type="eggNOG" id="COG1609">
    <property type="taxonomic scope" value="Bacteria"/>
</dbReference>
<dbReference type="OMA" id="HHTFIST"/>
<dbReference type="UniPathway" id="UPA00214"/>
<dbReference type="GO" id="GO:0003700">
    <property type="term" value="F:DNA-binding transcription factor activity"/>
    <property type="evidence" value="ECO:0007669"/>
    <property type="project" value="TreeGrafter"/>
</dbReference>
<dbReference type="GO" id="GO:0000976">
    <property type="term" value="F:transcription cis-regulatory region binding"/>
    <property type="evidence" value="ECO:0007669"/>
    <property type="project" value="TreeGrafter"/>
</dbReference>
<dbReference type="GO" id="GO:0006012">
    <property type="term" value="P:galactose metabolic process"/>
    <property type="evidence" value="ECO:0007669"/>
    <property type="project" value="UniProtKB-UniPathway"/>
</dbReference>
<dbReference type="CDD" id="cd01392">
    <property type="entry name" value="HTH_LacI"/>
    <property type="match status" value="1"/>
</dbReference>
<dbReference type="CDD" id="cd01544">
    <property type="entry name" value="PBP1_GalR"/>
    <property type="match status" value="1"/>
</dbReference>
<dbReference type="Gene3D" id="3.40.50.2300">
    <property type="match status" value="2"/>
</dbReference>
<dbReference type="Gene3D" id="1.10.260.40">
    <property type="entry name" value="lambda repressor-like DNA-binding domains"/>
    <property type="match status" value="1"/>
</dbReference>
<dbReference type="InterPro" id="IPR000843">
    <property type="entry name" value="HTH_LacI"/>
</dbReference>
<dbReference type="InterPro" id="IPR046335">
    <property type="entry name" value="LacI/GalR-like_sensor"/>
</dbReference>
<dbReference type="InterPro" id="IPR010982">
    <property type="entry name" value="Lambda_DNA-bd_dom_sf"/>
</dbReference>
<dbReference type="InterPro" id="IPR028082">
    <property type="entry name" value="Peripla_BP_I"/>
</dbReference>
<dbReference type="PANTHER" id="PTHR30146:SF149">
    <property type="entry name" value="HTH-TYPE TRANSCRIPTIONAL REGULATOR EBGR"/>
    <property type="match status" value="1"/>
</dbReference>
<dbReference type="PANTHER" id="PTHR30146">
    <property type="entry name" value="LACI-RELATED TRANSCRIPTIONAL REPRESSOR"/>
    <property type="match status" value="1"/>
</dbReference>
<dbReference type="Pfam" id="PF00356">
    <property type="entry name" value="LacI"/>
    <property type="match status" value="1"/>
</dbReference>
<dbReference type="Pfam" id="PF13377">
    <property type="entry name" value="Peripla_BP_3"/>
    <property type="match status" value="1"/>
</dbReference>
<dbReference type="PRINTS" id="PR00036">
    <property type="entry name" value="HTHLACI"/>
</dbReference>
<dbReference type="SMART" id="SM00354">
    <property type="entry name" value="HTH_LACI"/>
    <property type="match status" value="1"/>
</dbReference>
<dbReference type="SUPFAM" id="SSF47413">
    <property type="entry name" value="lambda repressor-like DNA-binding domains"/>
    <property type="match status" value="1"/>
</dbReference>
<dbReference type="SUPFAM" id="SSF53822">
    <property type="entry name" value="Periplasmic binding protein-like I"/>
    <property type="match status" value="1"/>
</dbReference>
<dbReference type="PROSITE" id="PS00356">
    <property type="entry name" value="HTH_LACI_1"/>
    <property type="match status" value="1"/>
</dbReference>
<dbReference type="PROSITE" id="PS50932">
    <property type="entry name" value="HTH_LACI_2"/>
    <property type="match status" value="1"/>
</dbReference>
<accession>Q9ZB11</accession>
<reference key="1">
    <citation type="journal article" date="2001" name="J. Bacteriol.">
        <title>Activation of silent gal genes in the lac-gal regulon of Streptococcus thermophilus.</title>
        <authorList>
            <person name="Vaughan E.E."/>
            <person name="van den Bogaard P.T.C."/>
            <person name="Catzeddu P."/>
            <person name="Kuipers O.P."/>
            <person name="de Vos W.M."/>
        </authorList>
    </citation>
    <scope>NUCLEOTIDE SEQUENCE [GENOMIC DNA]</scope>
    <source>
        <strain>CNRZ 302</strain>
    </source>
</reference>
<comment type="function">
    <text evidence="1">Repressor of the galactose operon. Binds galactose as an inducer (By similarity).</text>
</comment>
<comment type="pathway">
    <text>Carbohydrate metabolism; galactose metabolism [regulation].</text>
</comment>
<proteinExistence type="inferred from homology"/>
<organism>
    <name type="scientific">Streptococcus thermophilus</name>
    <dbReference type="NCBI Taxonomy" id="1308"/>
    <lineage>
        <taxon>Bacteria</taxon>
        <taxon>Bacillati</taxon>
        <taxon>Bacillota</taxon>
        <taxon>Bacilli</taxon>
        <taxon>Lactobacillales</taxon>
        <taxon>Streptococcaceae</taxon>
        <taxon>Streptococcus</taxon>
    </lineage>
</organism>
<gene>
    <name type="primary">galR</name>
</gene>
<sequence>MATLADIAKLAGVSISTVSRVLNKDETLSVTEDTRHRILTIADEIGYTKYKTINNSKKEKYQVAIIQWVSEEHELDDIYYYNIRLGIEKRAYELDYEMLHFFNDIPSSLGEEVVGVLCIGKFSREQIAKLERLKKTLVFVDSDTLNQGHPCVTTDFENSVQSALCYLKEQGCNNIGLLIGQEKTTDATEIISDPRLRSYRNYCMEKGIYDPLFILTGDFTVQSGYELLDSKIKSGATLPDAYFAASDSLAIGALRALQENGIKVPDDIQIISFNDTTLAKQVYPPLSSVTVYTEEMGRTAMDILNKQLLAPRKIPTLTKLGTKLTLRNSTK</sequence>
<name>GALR_STRTR</name>
<feature type="chain" id="PRO_0000107955" description="HTH-type transcriptional regulator GalR">
    <location>
        <begin position="1"/>
        <end position="331"/>
    </location>
</feature>
<feature type="domain" description="HTH lacI-type" evidence="2">
    <location>
        <begin position="1"/>
        <end position="62"/>
    </location>
</feature>
<feature type="DNA-binding region" description="H-T-H motif" evidence="2">
    <location>
        <begin position="4"/>
        <end position="23"/>
    </location>
</feature>
<keyword id="KW-0119">Carbohydrate metabolism</keyword>
<keyword id="KW-0238">DNA-binding</keyword>
<keyword id="KW-0299">Galactose metabolism</keyword>
<keyword id="KW-0678">Repressor</keyword>
<keyword id="KW-0804">Transcription</keyword>
<keyword id="KW-0805">Transcription regulation</keyword>
<evidence type="ECO:0000250" key="1"/>
<evidence type="ECO:0000255" key="2">
    <source>
        <dbReference type="PROSITE-ProRule" id="PRU00111"/>
    </source>
</evidence>
<protein>
    <recommendedName>
        <fullName>HTH-type transcriptional regulator GalR</fullName>
    </recommendedName>
    <alternativeName>
        <fullName>Galactose operon repressor</fullName>
    </alternativeName>
</protein>